<proteinExistence type="evidence at transcript level"/>
<feature type="signal peptide" evidence="3">
    <location>
        <begin position="1"/>
        <end position="23"/>
    </location>
</feature>
<feature type="chain" id="PRO_0000428674" description="Glucose transporter type 1">
    <location>
        <begin position="24"/>
        <end position="1440"/>
    </location>
</feature>
<feature type="topological domain" description="Cytoplasmic" evidence="3">
    <location>
        <begin position="24"/>
        <end position="67"/>
    </location>
</feature>
<feature type="transmembrane region" description="Helical; Name=1" evidence="3">
    <location>
        <begin position="68"/>
        <end position="88"/>
    </location>
</feature>
<feature type="topological domain" description="Extracellular" evidence="3">
    <location>
        <begin position="89"/>
        <end position="95"/>
    </location>
</feature>
<feature type="transmembrane region" description="Helical; Name=2" evidence="3">
    <location>
        <begin position="96"/>
        <end position="116"/>
    </location>
</feature>
<feature type="topological domain" description="Cytoplasmic" evidence="3">
    <location>
        <begin position="117"/>
        <end position="127"/>
    </location>
</feature>
<feature type="transmembrane region" description="Helical; Name=3" evidence="3">
    <location>
        <begin position="128"/>
        <end position="148"/>
    </location>
</feature>
<feature type="topological domain" description="Extracellular" evidence="3">
    <location>
        <begin position="149"/>
        <end position="162"/>
    </location>
</feature>
<feature type="transmembrane region" description="Helical; Name=4" evidence="3">
    <location>
        <begin position="163"/>
        <end position="183"/>
    </location>
</feature>
<feature type="topological domain" description="Cytoplasmic" evidence="3">
    <location>
        <begin position="184"/>
        <end position="186"/>
    </location>
</feature>
<feature type="transmembrane region" description="Helical; Name=5" evidence="3">
    <location>
        <begin position="187"/>
        <end position="207"/>
    </location>
</feature>
<feature type="topological domain" description="Extracellular" evidence="3">
    <location>
        <begin position="208"/>
        <end position="272"/>
    </location>
</feature>
<feature type="transmembrane region" description="Helical; Name=6" evidence="3">
    <location>
        <begin position="273"/>
        <end position="293"/>
    </location>
</feature>
<feature type="topological domain" description="Cytoplasmic" evidence="3">
    <location>
        <begin position="294"/>
        <end position="310"/>
    </location>
</feature>
<feature type="transmembrane region" description="Helical; Name=7" evidence="3">
    <location>
        <begin position="311"/>
        <end position="331"/>
    </location>
</feature>
<feature type="topological domain" description="Extracellular" evidence="3">
    <location>
        <begin position="332"/>
        <end position="339"/>
    </location>
</feature>
<feature type="transmembrane region" description="Helical; Name=8" evidence="3">
    <location>
        <begin position="340"/>
        <end position="360"/>
    </location>
</feature>
<feature type="topological domain" description="Cytoplasmic" evidence="3">
    <location>
        <begin position="361"/>
        <end position="372"/>
    </location>
</feature>
<feature type="transmembrane region" description="Helical; Name=9" evidence="3">
    <location>
        <begin position="373"/>
        <end position="393"/>
    </location>
</feature>
<feature type="topological domain" description="Extracellular" evidence="3">
    <location>
        <begin position="394"/>
        <end position="405"/>
    </location>
</feature>
<feature type="transmembrane region" description="Helical; Name=10" evidence="3">
    <location>
        <begin position="406"/>
        <end position="426"/>
    </location>
</feature>
<feature type="topological domain" description="Cytoplasmic" evidence="3">
    <location>
        <begin position="427"/>
        <end position="429"/>
    </location>
</feature>
<feature type="transmembrane region" description="Helical; Name=11" evidence="3">
    <location>
        <begin position="430"/>
        <end position="450"/>
    </location>
</feature>
<feature type="topological domain" description="Extracellular" evidence="3">
    <location>
        <begin position="451"/>
        <end position="534"/>
    </location>
</feature>
<feature type="transmembrane region" description="Helical; Name=12" evidence="3">
    <location>
        <begin position="535"/>
        <end position="555"/>
    </location>
</feature>
<feature type="topological domain" description="Cytoplasmic" evidence="3">
    <location>
        <begin position="556"/>
        <end position="1440"/>
    </location>
</feature>
<feature type="region of interest" description="Disordered" evidence="4">
    <location>
        <begin position="628"/>
        <end position="708"/>
    </location>
</feature>
<feature type="region of interest" description="Disordered" evidence="4">
    <location>
        <begin position="725"/>
        <end position="808"/>
    </location>
</feature>
<feature type="region of interest" description="Disordered" evidence="4">
    <location>
        <begin position="966"/>
        <end position="987"/>
    </location>
</feature>
<feature type="region of interest" description="Disordered" evidence="4">
    <location>
        <begin position="1000"/>
        <end position="1083"/>
    </location>
</feature>
<feature type="region of interest" description="Disordered" evidence="4">
    <location>
        <begin position="1304"/>
        <end position="1330"/>
    </location>
</feature>
<feature type="region of interest" description="Disordered" evidence="4">
    <location>
        <begin position="1380"/>
        <end position="1401"/>
    </location>
</feature>
<feature type="compositionally biased region" description="Polar residues" evidence="4">
    <location>
        <begin position="669"/>
        <end position="678"/>
    </location>
</feature>
<feature type="compositionally biased region" description="Low complexity" evidence="4">
    <location>
        <begin position="686"/>
        <end position="704"/>
    </location>
</feature>
<feature type="compositionally biased region" description="Pro residues" evidence="4">
    <location>
        <begin position="730"/>
        <end position="739"/>
    </location>
</feature>
<feature type="compositionally biased region" description="Basic residues" evidence="4">
    <location>
        <begin position="754"/>
        <end position="789"/>
    </location>
</feature>
<feature type="compositionally biased region" description="Low complexity" evidence="4">
    <location>
        <begin position="1313"/>
        <end position="1330"/>
    </location>
</feature>
<feature type="binding site" evidence="2">
    <location>
        <position position="162"/>
    </location>
    <ligand>
        <name>D-glucose</name>
        <dbReference type="ChEBI" id="CHEBI:4167"/>
    </ligand>
</feature>
<feature type="binding site" evidence="2">
    <location>
        <begin position="283"/>
        <end position="284"/>
    </location>
    <ligand>
        <name>D-glucose</name>
        <dbReference type="ChEBI" id="CHEBI:4167"/>
    </ligand>
</feature>
<feature type="binding site" evidence="2">
    <location>
        <position position="289"/>
    </location>
    <ligand>
        <name>D-glucose</name>
        <dbReference type="ChEBI" id="CHEBI:4167"/>
    </ligand>
</feature>
<feature type="binding site" evidence="2">
    <location>
        <position position="391"/>
    </location>
    <ligand>
        <name>D-glucose</name>
        <dbReference type="ChEBI" id="CHEBI:4167"/>
    </ligand>
</feature>
<feature type="glycosylation site" description="N-linked (GlcNAc...) asparagine" evidence="3">
    <location>
        <position position="460"/>
    </location>
</feature>
<feature type="glycosylation site" description="N-linked (GlcNAc...) asparagine" evidence="3">
    <location>
        <position position="480"/>
    </location>
</feature>
<feature type="splice variant" id="VSP_054193" description="In isoform T." evidence="12">
    <original>MAFLCAPGLTFFLTYSIFSAVLGMLQFGYNTGVINAPEKNIENFMKDVYKDRYGEDISEEFIQQLYSVAVSIFAIGGMLGGFSGGWMANRFGRKGGLLLNNVLGIAGACLMGFTKVSHSYEMLFLGRFIIGVNCGLNTSLVPMYISEIA</original>
    <variation>MATIGDLSMISPPTSSISNDQDPFGQLPPLPPPLRSTQVLQPLSVFPVSNLSEDSYDYVFGGRRKTPPTTTSTQLKLTSPPVRLRPEDAYRGANINNGRFYRHSFSYAPKRQRHSSRDDRDRESRLRCHGEDEATLRQLLLEFAQVMFS</variation>
    <location>
        <begin position="1"/>
        <end position="149"/>
    </location>
</feature>
<feature type="splice variant" id="VSP_054194" description="In isoform L." evidence="12">
    <original>MAFLCAP</original>
    <variation>MSMNLSAKLDELQRGDRHLETTVALCEIRTQLQELTKSVESCQSEVSEVKRDMVAIKHELDTVQQVKEEIEELREYVDRLEEHTHRRKLRLLEQ</variation>
    <location>
        <begin position="1"/>
        <end position="7"/>
    </location>
</feature>
<feature type="splice variant" id="VSP_054195" description="In isoform R." evidence="12">
    <original>MAFLCAP</original>
    <variation>MATIGDLSMISPPTSSISNDQDPFGQLPPLPPPLRSTQVLQPLSVFPVSNLSEDSYDYVFGGRRKTPPTTTSTQLKLTSPPVRLRPEDAYRGANINNGRFYRHSFSYAPKRQRHSSRDDRDRESRLRCHGEDEATLRQLLLDLQKQVSVMSMNLSAKLDELQRGDRHLETTVALCEIRTQLQELTKSVESCQSEVSEVKRDMVAIKHELDTVQQVKEEIEELREYVDRLEEHTHRRKLRLLEQNQLPTTQSQTTTRPKNHPELPEHPSTQPHKTTDGRNCHHDGQMQMLFGLAS</variation>
    <location>
        <begin position="1"/>
        <end position="7"/>
    </location>
</feature>
<feature type="splice variant" id="VSP_054196" description="In isoform S, isoform U, isoform W, isoform X and isoform V." evidence="10">
    <original>MAFLCAP</original>
    <variation>MATIGDLSMISPPTSSISNDQDPFGQLPPLPPPLRSTQVLQPLSVFPVSNLSEDSYDYVFGGRRKTPPTTTSTQLKLTSPPVRLRPEDAYRGANINNGRFYRHSFSYAPKRQRHSSRDDRDRESRLRCHGEDEATLRQLLLDLQKQVSVMSMNLSAKLDELQRGDRHLETTVALCEIRTQLQELTKSVESCQSEVSEVKRDMVAIKHELDTVQQVKEEIEELREYVDRLEEHTHRRKLRLLEQ</variation>
    <location>
        <begin position="1"/>
        <end position="7"/>
    </location>
</feature>
<feature type="splice variant" id="VSP_054197" description="In isoform O." evidence="12">
    <original>P</original>
    <variation>PVKRDMVAIKHELDTVQQVKEEIEELREYVDRLEEHTHRRKLRLLEQVCSLNYLPCC</variation>
    <location>
        <position position="7"/>
    </location>
</feature>
<feature type="splice variant" id="VSP_054198" description="In isoform U." evidence="12">
    <original>GLTFFLTYSIFSAVLGMLQFGYNTGVINAPEKNIENFMKDVYKDRYGEDISEEFIQQLYSVAVSI</original>
    <variation>NQLPTTQSQTTTRPKNHPELPEHPSTQPHKTTDGRNCHHDGQMQMLFGLASVSVHTQTNLSPITT</variation>
    <location>
        <begin position="8"/>
        <end position="72"/>
    </location>
</feature>
<feature type="splice variant" id="VSP_054199" description="In isoform U." evidence="12">
    <location>
        <begin position="73"/>
        <end position="1440"/>
    </location>
</feature>
<feature type="splice variant" id="VSP_054200" description="In isoform T." evidence="12">
    <location>
        <begin position="150"/>
        <end position="1440"/>
    </location>
</feature>
<feature type="splice variant" id="VSP_054201" description="In isoform S." evidence="10">
    <original>EMIDWMSYLSVVATLGFVVFFAVGPGSIPWMITAELFSQGPRPSAMAIAV</original>
    <variation>ASIVVSRILESCSCSCRVMPANVNAKMPASLGLHLFVPRPFSDLHMTLKS</variation>
    <location>
        <begin position="362"/>
        <end position="411"/>
    </location>
</feature>
<feature type="splice variant" id="VSP_054202" description="In isoform L, isoform E, isoform O and isoform R." evidence="11">
    <original>E</original>
    <variation>EFFGYVQE</variation>
    <location>
        <position position="362"/>
    </location>
</feature>
<feature type="splice variant" id="VSP_054203" description="In isoform S." evidence="10">
    <location>
        <begin position="412"/>
        <end position="1440"/>
    </location>
</feature>
<feature type="splice variant" id="VSP_054204" description="In isoform D, isoform L, isoform O, isoform R and isoform W." evidence="12">
    <original>RSMLNCTNSLEPQSMNSGIEHAALMVSEEKTQH</original>
    <variation>SEDNANGNSVTTADFELSQNDGEEKGGVHAKAQ</variation>
    <location>
        <begin position="476"/>
        <end position="508"/>
    </location>
</feature>
<feature type="splice variant" id="VSP_054205" description="In isoform M." evidence="12">
    <original>RSM</original>
    <variation>SRA</variation>
    <location>
        <begin position="476"/>
        <end position="478"/>
    </location>
</feature>
<feature type="splice variant" id="VSP_054206" description="In isoform B, isoform E and isoform V." evidence="8 11">
    <original>SMLNC</original>
    <variation>YVSLH</variation>
    <location>
        <begin position="477"/>
        <end position="481"/>
    </location>
</feature>
<feature type="splice variant" id="VSP_054207" description="In isoform M." evidence="12">
    <location>
        <begin position="479"/>
        <end position="1440"/>
    </location>
</feature>
<feature type="splice variant" id="VSP_054208" description="In isoform B, isoform E and isoform V." evidence="8 11">
    <location>
        <begin position="482"/>
        <end position="1440"/>
    </location>
</feature>
<feature type="splice variant" id="VSP_054209" description="In isoform D, isoform L, isoform O, isoform R and isoform W." evidence="12">
    <location>
        <begin position="509"/>
        <end position="1440"/>
    </location>
</feature>
<feature type="splice variant" id="VSP_054210" description="In isoform Q, isoform J and isoform X." evidence="12">
    <original>LFGTTSFSLTVEGMGPYPLSDSTNLLGPGSSSYGPGGVLGLAGSGSGLGGQCYTNYGTNLQTPQAARKCHYDEVDDYSFRRHSAHGRITQMKGKPLILGPTIKKDKKKERTDWLT</original>
    <variation>P</variation>
    <location>
        <begin position="511"/>
        <end position="625"/>
    </location>
</feature>
<feature type="splice variant" id="VSP_054211" description="In isoform J and isoform X." evidence="12">
    <location>
        <begin position="663"/>
        <end position="1440"/>
    </location>
</feature>
<keyword id="KW-0025">Alternative splicing</keyword>
<keyword id="KW-0325">Glycoprotein</keyword>
<keyword id="KW-0472">Membrane</keyword>
<keyword id="KW-1185">Reference proteome</keyword>
<keyword id="KW-0732">Signal</keyword>
<keyword id="KW-0762">Sugar transport</keyword>
<keyword id="KW-0812">Transmembrane</keyword>
<keyword id="KW-1133">Transmembrane helix</keyword>
<keyword id="KW-0813">Transport</keyword>
<dbReference type="EMBL" id="AF064703">
    <property type="protein sequence ID" value="AAC36683.2"/>
    <property type="molecule type" value="mRNA"/>
</dbReference>
<dbReference type="EMBL" id="AE014296">
    <property type="protein sequence ID" value="AAF47434.2"/>
    <property type="molecule type" value="Genomic_DNA"/>
</dbReference>
<dbReference type="EMBL" id="AE014296">
    <property type="protein sequence ID" value="AAN11454.5"/>
    <property type="molecule type" value="Genomic_DNA"/>
</dbReference>
<dbReference type="EMBL" id="AE014296">
    <property type="protein sequence ID" value="ABW08432.1"/>
    <property type="molecule type" value="Genomic_DNA"/>
</dbReference>
<dbReference type="EMBL" id="AE014296">
    <property type="protein sequence ID" value="ABW08433.1"/>
    <property type="molecule type" value="Genomic_DNA"/>
</dbReference>
<dbReference type="EMBL" id="AE014296">
    <property type="protein sequence ID" value="ABW08434.2"/>
    <property type="molecule type" value="Genomic_DNA"/>
</dbReference>
<dbReference type="EMBL" id="AE014296">
    <property type="protein sequence ID" value="ABW08435.2"/>
    <property type="molecule type" value="Genomic_DNA"/>
</dbReference>
<dbReference type="EMBL" id="AE014296">
    <property type="protein sequence ID" value="AGB93925.1"/>
    <property type="molecule type" value="Genomic_DNA"/>
</dbReference>
<dbReference type="EMBL" id="AE014296">
    <property type="protein sequence ID" value="AGB93926.1"/>
    <property type="molecule type" value="Genomic_DNA"/>
</dbReference>
<dbReference type="EMBL" id="AE014296">
    <property type="protein sequence ID" value="AGB93927.1"/>
    <property type="molecule type" value="Genomic_DNA"/>
</dbReference>
<dbReference type="EMBL" id="AE014296">
    <property type="protein sequence ID" value="AGB93928.1"/>
    <property type="molecule type" value="Genomic_DNA"/>
</dbReference>
<dbReference type="EMBL" id="AE014296">
    <property type="protein sequence ID" value="AGB93929.1"/>
    <property type="molecule type" value="Genomic_DNA"/>
</dbReference>
<dbReference type="EMBL" id="AE014296">
    <property type="protein sequence ID" value="AGB93930.1"/>
    <property type="molecule type" value="Genomic_DNA"/>
</dbReference>
<dbReference type="EMBL" id="AE014296">
    <property type="protein sequence ID" value="AGB93931.1"/>
    <property type="molecule type" value="Genomic_DNA"/>
</dbReference>
<dbReference type="EMBL" id="AE014296">
    <property type="protein sequence ID" value="AGB93932.1"/>
    <property type="molecule type" value="Genomic_DNA"/>
</dbReference>
<dbReference type="EMBL" id="AE014296">
    <property type="protein sequence ID" value="AGB93933.1"/>
    <property type="molecule type" value="Genomic_DNA"/>
</dbReference>
<dbReference type="EMBL" id="AY059441">
    <property type="protein sequence ID" value="AAL13347.1"/>
    <property type="status" value="ALT_FRAME"/>
    <property type="molecule type" value="mRNA"/>
</dbReference>
<dbReference type="EMBL" id="BT011383">
    <property type="protein sequence ID" value="AAR96175.1"/>
    <property type="molecule type" value="mRNA"/>
</dbReference>
<dbReference type="RefSeq" id="NP_001097467.1">
    <molecule id="Q8IRI6-3"/>
    <property type="nucleotide sequence ID" value="NM_001103997.3"/>
</dbReference>
<dbReference type="RefSeq" id="NP_001097468.1">
    <molecule id="Q8IRI6-17"/>
    <property type="nucleotide sequence ID" value="NM_001103998.3"/>
</dbReference>
<dbReference type="RefSeq" id="NP_001097469.2">
    <molecule id="Q8IRI6-6"/>
    <property type="nucleotide sequence ID" value="NM_001103999.4"/>
</dbReference>
<dbReference type="RefSeq" id="NP_001097470.2">
    <molecule id="Q8IRI6-9"/>
    <property type="nucleotide sequence ID" value="NM_001104000.2"/>
</dbReference>
<dbReference type="RefSeq" id="NP_001261230.1">
    <molecule id="Q8IRI6-10"/>
    <property type="nucleotide sequence ID" value="NM_001274301.1"/>
</dbReference>
<dbReference type="RefSeq" id="NP_001261231.1">
    <molecule id="Q8IRI6-11"/>
    <property type="nucleotide sequence ID" value="NM_001274302.1"/>
</dbReference>
<dbReference type="RefSeq" id="NP_001261232.1">
    <molecule id="Q8IRI6-12"/>
    <property type="nucleotide sequence ID" value="NM_001274303.1"/>
</dbReference>
<dbReference type="RefSeq" id="NP_001261233.1">
    <molecule id="Q8IRI6-13"/>
    <property type="nucleotide sequence ID" value="NM_001274304.1"/>
</dbReference>
<dbReference type="RefSeq" id="NP_001261234.1">
    <molecule id="Q8IRI6-18"/>
    <property type="nucleotide sequence ID" value="NM_001274305.1"/>
</dbReference>
<dbReference type="RefSeq" id="NP_001261235.1">
    <molecule id="Q8IRI6-8"/>
    <property type="nucleotide sequence ID" value="NM_001274306.1"/>
</dbReference>
<dbReference type="RefSeq" id="NP_001261236.1">
    <molecule id="Q8IRI6-16"/>
    <property type="nucleotide sequence ID" value="NM_001274307.1"/>
</dbReference>
<dbReference type="RefSeq" id="NP_001261237.1">
    <molecule id="Q8IRI6-14"/>
    <property type="nucleotide sequence ID" value="NM_001274308.1"/>
</dbReference>
<dbReference type="RefSeq" id="NP_001261238.1">
    <molecule id="Q8IRI6-15"/>
    <property type="nucleotide sequence ID" value="NM_001274309.1"/>
</dbReference>
<dbReference type="RefSeq" id="NP_001286896.1">
    <molecule id="Q8IRI6-11"/>
    <property type="nucleotide sequence ID" value="NM_001299967.1"/>
</dbReference>
<dbReference type="RefSeq" id="NP_523878.1">
    <molecule id="Q8IRI6-2"/>
    <property type="nucleotide sequence ID" value="NM_079154.3"/>
</dbReference>
<dbReference type="RefSeq" id="NP_612073.2">
    <molecule id="Q8IRI6-5"/>
    <property type="nucleotide sequence ID" value="NM_138229.2"/>
</dbReference>
<dbReference type="RefSeq" id="NP_728557.1">
    <molecule id="Q8IRI6-2"/>
    <property type="nucleotide sequence ID" value="NM_167845.3"/>
</dbReference>
<dbReference type="RefSeq" id="NP_728558.5">
    <molecule id="Q8IRI6-7"/>
    <property type="nucleotide sequence ID" value="NM_167846.3"/>
</dbReference>
<dbReference type="BioGRID" id="63662">
    <property type="interactions" value="2"/>
</dbReference>
<dbReference type="FunCoup" id="Q8IRI6">
    <property type="interactions" value="13"/>
</dbReference>
<dbReference type="IntAct" id="Q8IRI6">
    <property type="interactions" value="2"/>
</dbReference>
<dbReference type="STRING" id="7227.FBpp0305685"/>
<dbReference type="GlyCosmos" id="Q8IRI6">
    <property type="glycosylation" value="2 sites, No reported glycans"/>
</dbReference>
<dbReference type="GlyGen" id="Q8IRI6">
    <property type="glycosylation" value="3 sites"/>
</dbReference>
<dbReference type="PaxDb" id="7227-FBpp0305687"/>
<dbReference type="DNASU" id="38109"/>
<dbReference type="EnsemblMetazoa" id="FBtr0333493">
    <molecule id="Q8IRI6-10"/>
    <property type="protein sequence ID" value="FBpp0305677"/>
    <property type="gene ID" value="FBgn0264574"/>
</dbReference>
<dbReference type="EnsemblMetazoa" id="FBtr0333494">
    <molecule id="Q8IRI6-6"/>
    <property type="protein sequence ID" value="FBpp0305678"/>
    <property type="gene ID" value="FBgn0264574"/>
</dbReference>
<dbReference type="EnsemblMetazoa" id="FBtr0333495">
    <molecule id="Q8IRI6-11"/>
    <property type="protein sequence ID" value="FBpp0305679"/>
    <property type="gene ID" value="FBgn0264574"/>
</dbReference>
<dbReference type="EnsemblMetazoa" id="FBtr0333496">
    <molecule id="Q8IRI6-2"/>
    <property type="protein sequence ID" value="FBpp0305680"/>
    <property type="gene ID" value="FBgn0264574"/>
</dbReference>
<dbReference type="EnsemblMetazoa" id="FBtr0333497">
    <molecule id="Q8IRI6-2"/>
    <property type="protein sequence ID" value="FBpp0305681"/>
    <property type="gene ID" value="FBgn0264574"/>
</dbReference>
<dbReference type="EnsemblMetazoa" id="FBtr0333498">
    <molecule id="Q8IRI6-3"/>
    <property type="protein sequence ID" value="FBpp0305682"/>
    <property type="gene ID" value="FBgn0264574"/>
</dbReference>
<dbReference type="EnsemblMetazoa" id="FBtr0333499">
    <molecule id="Q8IRI6-17"/>
    <property type="protein sequence ID" value="FBpp0305683"/>
    <property type="gene ID" value="FBgn0264574"/>
</dbReference>
<dbReference type="EnsemblMetazoa" id="FBtr0333500">
    <molecule id="Q8IRI6-12"/>
    <property type="protein sequence ID" value="FBpp0305684"/>
    <property type="gene ID" value="FBgn0264574"/>
</dbReference>
<dbReference type="EnsemblMetazoa" id="FBtr0333501">
    <molecule id="Q8IRI6-5"/>
    <property type="protein sequence ID" value="FBpp0305685"/>
    <property type="gene ID" value="FBgn0264574"/>
</dbReference>
<dbReference type="EnsemblMetazoa" id="FBtr0333502">
    <molecule id="Q8IRI6-9"/>
    <property type="protein sequence ID" value="FBpp0305686"/>
    <property type="gene ID" value="FBgn0264574"/>
</dbReference>
<dbReference type="EnsemblMetazoa" id="FBtr0333503">
    <molecule id="Q8IRI6-13"/>
    <property type="protein sequence ID" value="FBpp0305687"/>
    <property type="gene ID" value="FBgn0264574"/>
</dbReference>
<dbReference type="EnsemblMetazoa" id="FBtr0333504">
    <molecule id="Q8IRI6-7"/>
    <property type="protein sequence ID" value="FBpp0305688"/>
    <property type="gene ID" value="FBgn0264574"/>
</dbReference>
<dbReference type="EnsemblMetazoa" id="FBtr0333505">
    <molecule id="Q8IRI6-18"/>
    <property type="protein sequence ID" value="FBpp0305689"/>
    <property type="gene ID" value="FBgn0264574"/>
</dbReference>
<dbReference type="EnsemblMetazoa" id="FBtr0333506">
    <molecule id="Q8IRI6-8"/>
    <property type="protein sequence ID" value="FBpp0305690"/>
    <property type="gene ID" value="FBgn0264574"/>
</dbReference>
<dbReference type="EnsemblMetazoa" id="FBtr0333507">
    <molecule id="Q8IRI6-16"/>
    <property type="protein sequence ID" value="FBpp0305691"/>
    <property type="gene ID" value="FBgn0264574"/>
</dbReference>
<dbReference type="EnsemblMetazoa" id="FBtr0333508">
    <molecule id="Q8IRI6-14"/>
    <property type="protein sequence ID" value="FBpp0305692"/>
    <property type="gene ID" value="FBgn0264574"/>
</dbReference>
<dbReference type="EnsemblMetazoa" id="FBtr0333509">
    <molecule id="Q8IRI6-15"/>
    <property type="protein sequence ID" value="FBpp0305693"/>
    <property type="gene ID" value="FBgn0264574"/>
</dbReference>
<dbReference type="EnsemblMetazoa" id="FBtr0345690">
    <molecule id="Q8IRI6-11"/>
    <property type="protein sequence ID" value="FBpp0311739"/>
    <property type="gene ID" value="FBgn0264574"/>
</dbReference>
<dbReference type="GeneID" id="38109"/>
<dbReference type="KEGG" id="dme:Dmel_CG43946"/>
<dbReference type="UCSC" id="CG1086-RD">
    <property type="organism name" value="d. melanogaster"/>
</dbReference>
<dbReference type="UCSC" id="CG1086-RE">
    <property type="organism name" value="d. melanogaster"/>
</dbReference>
<dbReference type="UCSC" id="CG1086-RF">
    <property type="organism name" value="d. melanogaster"/>
</dbReference>
<dbReference type="UCSC" id="CG13908-RA">
    <property type="organism name" value="d. melanogaster"/>
</dbReference>
<dbReference type="UCSC" id="CG13908-RB">
    <property type="organism name" value="d. melanogaster"/>
</dbReference>
<dbReference type="AGR" id="FB:FBgn0264574"/>
<dbReference type="CTD" id="38109"/>
<dbReference type="FlyBase" id="FBgn0264574">
    <property type="gene designation" value="Glut1"/>
</dbReference>
<dbReference type="VEuPathDB" id="VectorBase:FBgn0264574"/>
<dbReference type="eggNOG" id="KOG0569">
    <property type="taxonomic scope" value="Eukaryota"/>
</dbReference>
<dbReference type="HOGENOM" id="CLU_004788_0_0_1"/>
<dbReference type="InParanoid" id="Q8IRI6"/>
<dbReference type="OMA" id="FIPINHD"/>
<dbReference type="OrthoDB" id="4540492at2759"/>
<dbReference type="Reactome" id="R-DME-189200">
    <property type="pathway name" value="Cellular hexose transport"/>
</dbReference>
<dbReference type="Reactome" id="R-DME-196836">
    <property type="pathway name" value="Vitamin C (ascorbate) metabolism"/>
</dbReference>
<dbReference type="Reactome" id="R-DME-422356">
    <property type="pathway name" value="Regulation of insulin secretion"/>
</dbReference>
<dbReference type="Reactome" id="R-DME-5653890">
    <property type="pathway name" value="Lactose synthesis"/>
</dbReference>
<dbReference type="Reactome" id="R-DME-6798695">
    <property type="pathway name" value="Neutrophil degranulation"/>
</dbReference>
<dbReference type="Reactome" id="R-DME-8981373">
    <property type="pathway name" value="Intestinal hexose absorption"/>
</dbReference>
<dbReference type="BioGRID-ORCS" id="38109">
    <property type="hits" value="0 hits in 3 CRISPR screens"/>
</dbReference>
<dbReference type="ChiTaRS" id="Glut1">
    <property type="organism name" value="fly"/>
</dbReference>
<dbReference type="GenomeRNAi" id="38109"/>
<dbReference type="PRO" id="PR:Q8IRI6"/>
<dbReference type="Proteomes" id="UP000000803">
    <property type="component" value="Chromosome 3L"/>
</dbReference>
<dbReference type="Bgee" id="FBgn0264574">
    <property type="expression patterns" value="Expressed in antennal olfactory receptor neuron of basiconic sensillum in antenna and 226 other cell types or tissues"/>
</dbReference>
<dbReference type="ExpressionAtlas" id="Q8IRI6">
    <property type="expression patterns" value="baseline and differential"/>
</dbReference>
<dbReference type="GO" id="GO:0016020">
    <property type="term" value="C:membrane"/>
    <property type="evidence" value="ECO:0000318"/>
    <property type="project" value="GO_Central"/>
</dbReference>
<dbReference type="GO" id="GO:0015149">
    <property type="term" value="F:hexose transmembrane transporter activity"/>
    <property type="evidence" value="ECO:0000318"/>
    <property type="project" value="GO_Central"/>
</dbReference>
<dbReference type="GO" id="GO:0042593">
    <property type="term" value="P:glucose homeostasis"/>
    <property type="evidence" value="ECO:0000315"/>
    <property type="project" value="FlyBase"/>
</dbReference>
<dbReference type="GO" id="GO:0015749">
    <property type="term" value="P:monosaccharide transmembrane transport"/>
    <property type="evidence" value="ECO:0000318"/>
    <property type="project" value="GO_Central"/>
</dbReference>
<dbReference type="GO" id="GO:0090277">
    <property type="term" value="P:positive regulation of peptide hormone secretion"/>
    <property type="evidence" value="ECO:0000315"/>
    <property type="project" value="FlyBase"/>
</dbReference>
<dbReference type="CDD" id="cd17431">
    <property type="entry name" value="MFS_GLUT_Class1"/>
    <property type="match status" value="1"/>
</dbReference>
<dbReference type="FunFam" id="1.20.1250.20:FF:000029">
    <property type="entry name" value="solute carrier family 2, facilitated glucose transporter member 4"/>
    <property type="match status" value="1"/>
</dbReference>
<dbReference type="Gene3D" id="1.20.1250.20">
    <property type="entry name" value="MFS general substrate transporter like domains"/>
    <property type="match status" value="1"/>
</dbReference>
<dbReference type="InterPro" id="IPR045263">
    <property type="entry name" value="GLUT"/>
</dbReference>
<dbReference type="InterPro" id="IPR020846">
    <property type="entry name" value="MFS_dom"/>
</dbReference>
<dbReference type="InterPro" id="IPR005828">
    <property type="entry name" value="MFS_sugar_transport-like"/>
</dbReference>
<dbReference type="InterPro" id="IPR036259">
    <property type="entry name" value="MFS_trans_sf"/>
</dbReference>
<dbReference type="InterPro" id="IPR003663">
    <property type="entry name" value="Sugar/inositol_transpt"/>
</dbReference>
<dbReference type="InterPro" id="IPR005829">
    <property type="entry name" value="Sugar_transporter_CS"/>
</dbReference>
<dbReference type="NCBIfam" id="TIGR00879">
    <property type="entry name" value="SP"/>
    <property type="match status" value="1"/>
</dbReference>
<dbReference type="PANTHER" id="PTHR23503:SF128">
    <property type="entry name" value="GLUCOSE TRANSPORTER TYPE 1"/>
    <property type="match status" value="1"/>
</dbReference>
<dbReference type="PANTHER" id="PTHR23503">
    <property type="entry name" value="SOLUTE CARRIER FAMILY 2"/>
    <property type="match status" value="1"/>
</dbReference>
<dbReference type="Pfam" id="PF00083">
    <property type="entry name" value="Sugar_tr"/>
    <property type="match status" value="1"/>
</dbReference>
<dbReference type="PRINTS" id="PR00171">
    <property type="entry name" value="SUGRTRNSPORT"/>
</dbReference>
<dbReference type="SUPFAM" id="SSF103473">
    <property type="entry name" value="MFS general substrate transporter"/>
    <property type="match status" value="1"/>
</dbReference>
<dbReference type="PROSITE" id="PS50850">
    <property type="entry name" value="MFS"/>
    <property type="match status" value="1"/>
</dbReference>
<dbReference type="PROSITE" id="PS00217">
    <property type="entry name" value="SUGAR_TRANSPORT_2"/>
    <property type="match status" value="1"/>
</dbReference>
<name>GTR1_DROME</name>
<gene>
    <name type="primary">Glut1</name>
    <name type="ORF">CG43946</name>
</gene>
<comment type="function">
    <text evidence="5 12">Facilitative glucose transporter.</text>
</comment>
<comment type="subcellular location">
    <subcellularLocation>
        <location evidence="1">Membrane</location>
        <topology evidence="1">Multi-pass membrane protein</topology>
    </subcellularLocation>
</comment>
<comment type="alternative products">
    <event type="alternative splicing"/>
    <isoform>
        <id>Q8IRI6-5</id>
        <name>P</name>
        <sequence type="displayed"/>
    </isoform>
    <isoform>
        <id>Q8IRI6-2</id>
        <name evidence="5">B</name>
        <name evidence="9">C</name>
        <sequence type="described" ref="VSP_054206 VSP_054208"/>
    </isoform>
    <isoform>
        <id>Q8IRI6-3</id>
        <name>D</name>
        <sequence type="described" ref="VSP_054204 VSP_054209"/>
    </isoform>
    <isoform>
        <id>Q8IRI6-6</id>
        <name>L</name>
        <sequence type="described" ref="VSP_054194 VSP_054202 VSP_054204 VSP_054209"/>
    </isoform>
    <isoform>
        <id>Q8IRI6-7</id>
        <name>S</name>
        <sequence type="described" ref="VSP_054196 VSP_054201 VSP_054203"/>
    </isoform>
    <isoform>
        <id>Q8IRI6-8</id>
        <name>U</name>
        <sequence type="described" ref="VSP_054196 VSP_054198 VSP_054199"/>
    </isoform>
    <isoform>
        <id>Q8IRI6-9</id>
        <name>Q</name>
        <sequence type="described" ref="VSP_054210"/>
    </isoform>
    <isoform>
        <id>Q8IRI6-10</id>
        <name>M</name>
        <sequence type="described" ref="VSP_054205 VSP_054207"/>
    </isoform>
    <isoform>
        <id>Q8IRI6-11</id>
        <name>J</name>
        <sequence type="described" ref="VSP_054210 VSP_054211"/>
    </isoform>
    <isoform>
        <id>Q8IRI6-12</id>
        <name>O</name>
        <sequence type="described" ref="VSP_054197 VSP_054202 VSP_054204 VSP_054209"/>
    </isoform>
    <isoform>
        <id>Q8IRI6-13</id>
        <name>R</name>
        <sequence type="described" ref="VSP_054195 VSP_054202 VSP_054204 VSP_054209"/>
    </isoform>
    <isoform>
        <id>Q8IRI6-14</id>
        <name>W</name>
        <sequence type="described" ref="VSP_054196 VSP_054204 VSP_054209"/>
    </isoform>
    <isoform>
        <id>Q8IRI6-15</id>
        <name>X</name>
        <sequence type="described" ref="VSP_054196 VSP_054210 VSP_054211"/>
    </isoform>
    <isoform>
        <id>Q8IRI6-16</id>
        <name>V</name>
        <sequence type="described" ref="VSP_054196 VSP_054206 VSP_054208"/>
    </isoform>
    <isoform>
        <id>Q8IRI6-17</id>
        <name>E</name>
        <sequence type="described" ref="VSP_054202 VSP_054206 VSP_054208"/>
    </isoform>
    <isoform>
        <id>Q8IRI6-18</id>
        <name>T</name>
        <sequence type="described" ref="VSP_054193 VSP_054200"/>
    </isoform>
</comment>
<comment type="similarity">
    <text evidence="12">Belongs to the major facilitator superfamily. Sugar transporter (TC 2.A.1.1) family. Glucose transporter subfamily.</text>
</comment>
<comment type="sequence caution" evidence="12">
    <conflict type="frameshift">
        <sequence resource="EMBL-CDS" id="AAL13347"/>
    </conflict>
</comment>
<sequence length="1440" mass="158555">MAFLCAPGLTFFLTYSIFSAVLGMLQFGYNTGVINAPEKNIENFMKDVYKDRYGEDISEEFIQQLYSVAVSIFAIGGMLGGFSGGWMANRFGRKGGLLLNNVLGIAGACLMGFTKVSHSYEMLFLGRFIIGVNCGLNTSLVPMYISEIAPLNLRGGLGTVNQLAVTVGLLLSQVLGIEQILGTNEGWPILLGLAICPAILQLILLPVCPESPRYLLITKQWEEEARKALRRLRASGSVEEDIEEMRAEERAQQSESHISTMELICSPTLRPPLIIGIVMQLSQQFSGINAVFYYSTSLFMSSGLTEESAKFATIGIGAIMVVMTLVSIPLMDRTGRRTLHLYGLGGMFIFSIFITISFLIKEMIDWMSYLSVVATLGFVVFFAVGPGSIPWMITAELFSQGPRPSAMAIAVLVNWMANFVVGIGFPSMKTALENYTFLPFSVFLAIFWIFTYKKVPETKNKTFEEILALFRHNNGRSMLNCTNSLEPQSMNSGIEHAALMVSEEKTQHDSLFGTTSFSLTVEGMGPYPLSDSTNLLGPGSSSYGPGGVLGLAGSGSGLGGQCYTNYGTNLQTPQAARKCHYDEVDDYSFRRHSAHGRITQMKGKPLILGPTIKKDKKKERTDWLTASERFLEGGRSTHQGRSAASAPHHPRQPPPVCPSSGPXLRSASPPDSASVRSTSRAEEPHQPQQVHHQQQQVHHQQQHQSRYATHEYVHCSYEKEVVCDQANPSQAPPQQPAPPVQQHQQQPPPPLHHCQQRKHSHSPHHSRHTSPHSHHHHSHHSRHSRRSRRQGSGSLPGAHQGSANHSVMRPSICTSRRHRSVTDISTTNVCQDPACSDREVQEIMVRRTCCNTTATNSSSRTELAQCFAEDLYGSSRRPSSCCTSSDYCYQTDSTSLYGSRSSLSRNNSIKSASALVRKHHRSQRSLLPEHRHPSYTSISLRGLNASRPNSQLGSLTSIFDRAKNMAPEGSTLERQSSKGALGSSELPEYACSPSPIRWSFLADGRSPSEMEGAVGGGPEREQEEEDKLDAWQVPEPEPEKKPCRKITTSSSVYDEGPSTSAAAARKRRGSKGSRGSKGSGSYHCEFEDEATTTVMFHQDAGEAYNNCCSNNYNYIQCNTYLDQDLQITSEDIHQYLSKGDATASDILNNSKNYPFQPSNALEFQYKNNFQQGQANANNNNTNTTNTASSDAAECFQNYRAISKETNLNQTSTEQLSPTNINLSTSSNNINIVFSSSLERNANEVKFINNRSGASGGSEMGCEVGHHAGYLPYTYPSYDYTNMSGNSHFEKPLGIDELPKEFCGLEGAGGGGASTTSEHSSSLPSPQPLTHHQQLHHFESFDAASEHNLLAAQPMSPGSPLSGSVNPAGDDFVQMHHYHHANSPHSQSHHSHAHTHTHGHHVHHLLNHPAYDLTDDQFRLGSALKRVRKRARKYTDFLRKK</sequence>
<accession>Q8IRI6</accession>
<accession>A8JNH6</accession>
<accession>A8JNH8</accession>
<accession>A8JNH9</accession>
<accession>M9PBH4</accession>
<accession>M9PBH5</accession>
<accession>M9PDK7</accession>
<accession>M9PDL1</accession>
<accession>M9PDS4</accession>
<accession>M9PDS9</accession>
<accession>M9PE46</accession>
<accession>M9PGN5</accession>
<accession>M9PGP2</accession>
<accession>O77131</accession>
<accession>Q0E8K0</accession>
<accession>Q6NNA9</accession>
<accession>Q95TE8</accession>
<accession>Q9V409</accession>
<accession>Q9W0L2</accession>
<protein>
    <recommendedName>
        <fullName>Glucose transporter type 1</fullName>
    </recommendedName>
</protein>
<reference evidence="12 13" key="1">
    <citation type="journal article" date="1999" name="Hereditas">
        <title>The Drosophila glucose transporter gene: cDNA sequence, phylogenetic comparisons, analysis of functional sites and secondary structures.</title>
        <authorList>
            <person name="Andersson Escher S."/>
            <person name="Rasmuson-Lestander A."/>
        </authorList>
    </citation>
    <scope>NUCLEOTIDE SEQUENCE [MRNA] (ISOFORM B)</scope>
    <scope>FUNCTION</scope>
    <source>
        <tissue evidence="5">Embryo</tissue>
    </source>
</reference>
<reference key="2">
    <citation type="journal article" date="2000" name="Science">
        <title>The genome sequence of Drosophila melanogaster.</title>
        <authorList>
            <person name="Adams M.D."/>
            <person name="Celniker S.E."/>
            <person name="Holt R.A."/>
            <person name="Evans C.A."/>
            <person name="Gocayne J.D."/>
            <person name="Amanatides P.G."/>
            <person name="Scherer S.E."/>
            <person name="Li P.W."/>
            <person name="Hoskins R.A."/>
            <person name="Galle R.F."/>
            <person name="George R.A."/>
            <person name="Lewis S.E."/>
            <person name="Richards S."/>
            <person name="Ashburner M."/>
            <person name="Henderson S.N."/>
            <person name="Sutton G.G."/>
            <person name="Wortman J.R."/>
            <person name="Yandell M.D."/>
            <person name="Zhang Q."/>
            <person name="Chen L.X."/>
            <person name="Brandon R.C."/>
            <person name="Rogers Y.-H.C."/>
            <person name="Blazej R.G."/>
            <person name="Champe M."/>
            <person name="Pfeiffer B.D."/>
            <person name="Wan K.H."/>
            <person name="Doyle C."/>
            <person name="Baxter E.G."/>
            <person name="Helt G."/>
            <person name="Nelson C.R."/>
            <person name="Miklos G.L.G."/>
            <person name="Abril J.F."/>
            <person name="Agbayani A."/>
            <person name="An H.-J."/>
            <person name="Andrews-Pfannkoch C."/>
            <person name="Baldwin D."/>
            <person name="Ballew R.M."/>
            <person name="Basu A."/>
            <person name="Baxendale J."/>
            <person name="Bayraktaroglu L."/>
            <person name="Beasley E.M."/>
            <person name="Beeson K.Y."/>
            <person name="Benos P.V."/>
            <person name="Berman B.P."/>
            <person name="Bhandari D."/>
            <person name="Bolshakov S."/>
            <person name="Borkova D."/>
            <person name="Botchan M.R."/>
            <person name="Bouck J."/>
            <person name="Brokstein P."/>
            <person name="Brottier P."/>
            <person name="Burtis K.C."/>
            <person name="Busam D.A."/>
            <person name="Butler H."/>
            <person name="Cadieu E."/>
            <person name="Center A."/>
            <person name="Chandra I."/>
            <person name="Cherry J.M."/>
            <person name="Cawley S."/>
            <person name="Dahlke C."/>
            <person name="Davenport L.B."/>
            <person name="Davies P."/>
            <person name="de Pablos B."/>
            <person name="Delcher A."/>
            <person name="Deng Z."/>
            <person name="Mays A.D."/>
            <person name="Dew I."/>
            <person name="Dietz S.M."/>
            <person name="Dodson K."/>
            <person name="Doup L.E."/>
            <person name="Downes M."/>
            <person name="Dugan-Rocha S."/>
            <person name="Dunkov B.C."/>
            <person name="Dunn P."/>
            <person name="Durbin K.J."/>
            <person name="Evangelista C.C."/>
            <person name="Ferraz C."/>
            <person name="Ferriera S."/>
            <person name="Fleischmann W."/>
            <person name="Fosler C."/>
            <person name="Gabrielian A.E."/>
            <person name="Garg N.S."/>
            <person name="Gelbart W.M."/>
            <person name="Glasser K."/>
            <person name="Glodek A."/>
            <person name="Gong F."/>
            <person name="Gorrell J.H."/>
            <person name="Gu Z."/>
            <person name="Guan P."/>
            <person name="Harris M."/>
            <person name="Harris N.L."/>
            <person name="Harvey D.A."/>
            <person name="Heiman T.J."/>
            <person name="Hernandez J.R."/>
            <person name="Houck J."/>
            <person name="Hostin D."/>
            <person name="Houston K.A."/>
            <person name="Howland T.J."/>
            <person name="Wei M.-H."/>
            <person name="Ibegwam C."/>
            <person name="Jalali M."/>
            <person name="Kalush F."/>
            <person name="Karpen G.H."/>
            <person name="Ke Z."/>
            <person name="Kennison J.A."/>
            <person name="Ketchum K.A."/>
            <person name="Kimmel B.E."/>
            <person name="Kodira C.D."/>
            <person name="Kraft C.L."/>
            <person name="Kravitz S."/>
            <person name="Kulp D."/>
            <person name="Lai Z."/>
            <person name="Lasko P."/>
            <person name="Lei Y."/>
            <person name="Levitsky A.A."/>
            <person name="Li J.H."/>
            <person name="Li Z."/>
            <person name="Liang Y."/>
            <person name="Lin X."/>
            <person name="Liu X."/>
            <person name="Mattei B."/>
            <person name="McIntosh T.C."/>
            <person name="McLeod M.P."/>
            <person name="McPherson D."/>
            <person name="Merkulov G."/>
            <person name="Milshina N.V."/>
            <person name="Mobarry C."/>
            <person name="Morris J."/>
            <person name="Moshrefi A."/>
            <person name="Mount S.M."/>
            <person name="Moy M."/>
            <person name="Murphy B."/>
            <person name="Murphy L."/>
            <person name="Muzny D.M."/>
            <person name="Nelson D.L."/>
            <person name="Nelson D.R."/>
            <person name="Nelson K.A."/>
            <person name="Nixon K."/>
            <person name="Nusskern D.R."/>
            <person name="Pacleb J.M."/>
            <person name="Palazzolo M."/>
            <person name="Pittman G.S."/>
            <person name="Pan S."/>
            <person name="Pollard J."/>
            <person name="Puri V."/>
            <person name="Reese M.G."/>
            <person name="Reinert K."/>
            <person name="Remington K."/>
            <person name="Saunders R.D.C."/>
            <person name="Scheeler F."/>
            <person name="Shen H."/>
            <person name="Shue B.C."/>
            <person name="Siden-Kiamos I."/>
            <person name="Simpson M."/>
            <person name="Skupski M.P."/>
            <person name="Smith T.J."/>
            <person name="Spier E."/>
            <person name="Spradling A.C."/>
            <person name="Stapleton M."/>
            <person name="Strong R."/>
            <person name="Sun E."/>
            <person name="Svirskas R."/>
            <person name="Tector C."/>
            <person name="Turner R."/>
            <person name="Venter E."/>
            <person name="Wang A.H."/>
            <person name="Wang X."/>
            <person name="Wang Z.-Y."/>
            <person name="Wassarman D.A."/>
            <person name="Weinstock G.M."/>
            <person name="Weissenbach J."/>
            <person name="Williams S.M."/>
            <person name="Woodage T."/>
            <person name="Worley K.C."/>
            <person name="Wu D."/>
            <person name="Yang S."/>
            <person name="Yao Q.A."/>
            <person name="Ye J."/>
            <person name="Yeh R.-F."/>
            <person name="Zaveri J.S."/>
            <person name="Zhan M."/>
            <person name="Zhang G."/>
            <person name="Zhao Q."/>
            <person name="Zheng L."/>
            <person name="Zheng X.H."/>
            <person name="Zhong F.N."/>
            <person name="Zhong W."/>
            <person name="Zhou X."/>
            <person name="Zhu S.C."/>
            <person name="Zhu X."/>
            <person name="Smith H.O."/>
            <person name="Gibbs R.A."/>
            <person name="Myers E.W."/>
            <person name="Rubin G.M."/>
            <person name="Venter J.C."/>
        </authorList>
    </citation>
    <scope>NUCLEOTIDE SEQUENCE [LARGE SCALE GENOMIC DNA]</scope>
    <source>
        <strain evidence="6">Berkeley</strain>
    </source>
</reference>
<reference evidence="12" key="3">
    <citation type="journal article" date="2002" name="Genome Biol.">
        <title>Annotation of the Drosophila melanogaster euchromatic genome: a systematic review.</title>
        <authorList>
            <person name="Misra S."/>
            <person name="Crosby M.A."/>
            <person name="Mungall C.J."/>
            <person name="Matthews B.B."/>
            <person name="Campbell K.S."/>
            <person name="Hradecky P."/>
            <person name="Huang Y."/>
            <person name="Kaminker J.S."/>
            <person name="Millburn G.H."/>
            <person name="Prochnik S.E."/>
            <person name="Smith C.D."/>
            <person name="Tupy J.L."/>
            <person name="Whitfield E.J."/>
            <person name="Bayraktaroglu L."/>
            <person name="Berman B.P."/>
            <person name="Bettencourt B.R."/>
            <person name="Celniker S.E."/>
            <person name="de Grey A.D.N.J."/>
            <person name="Drysdale R.A."/>
            <person name="Harris N.L."/>
            <person name="Richter J."/>
            <person name="Russo S."/>
            <person name="Schroeder A.J."/>
            <person name="Shu S.Q."/>
            <person name="Stapleton M."/>
            <person name="Yamada C."/>
            <person name="Ashburner M."/>
            <person name="Gelbart W.M."/>
            <person name="Rubin G.M."/>
            <person name="Lewis S.E."/>
        </authorList>
    </citation>
    <scope>GENOME REANNOTATION</scope>
    <scope>ALTERNATIVE SPLICING</scope>
    <source>
        <strain>Berkeley</strain>
    </source>
</reference>
<reference evidence="12 14" key="4">
    <citation type="journal article" date="2002" name="Genome Biol.">
        <title>A Drosophila full-length cDNA resource.</title>
        <authorList>
            <person name="Stapleton M."/>
            <person name="Carlson J.W."/>
            <person name="Brokstein P."/>
            <person name="Yu C."/>
            <person name="Champe M."/>
            <person name="George R.A."/>
            <person name="Guarin H."/>
            <person name="Kronmiller B."/>
            <person name="Pacleb J.M."/>
            <person name="Park S."/>
            <person name="Wan K.H."/>
            <person name="Rubin G.M."/>
            <person name="Celniker S.E."/>
        </authorList>
    </citation>
    <scope>NUCLEOTIDE SEQUENCE [LARGE SCALE MRNA] (ISOFORM S)</scope>
    <source>
        <strain evidence="7">Berkeley</strain>
        <tissue evidence="7">Head</tissue>
    </source>
</reference>
<reference key="5">
    <citation type="submission" date="2004-01" db="EMBL/GenBank/DDBJ databases">
        <authorList>
            <person name="Stapleton M."/>
            <person name="Carlson J."/>
            <person name="Chavez C."/>
            <person name="Frise E."/>
            <person name="George R."/>
            <person name="Pacleb J."/>
            <person name="Park S."/>
            <person name="Wan K."/>
            <person name="Yu C."/>
            <person name="Rubin G.M."/>
            <person name="Celniker S."/>
        </authorList>
    </citation>
    <scope>NUCLEOTIDE SEQUENCE [LARGE SCALE MRNA] (ISOFORM E)</scope>
    <source>
        <strain>Berkeley</strain>
        <tissue>Embryo</tissue>
    </source>
</reference>
<organism>
    <name type="scientific">Drosophila melanogaster</name>
    <name type="common">Fruit fly</name>
    <dbReference type="NCBI Taxonomy" id="7227"/>
    <lineage>
        <taxon>Eukaryota</taxon>
        <taxon>Metazoa</taxon>
        <taxon>Ecdysozoa</taxon>
        <taxon>Arthropoda</taxon>
        <taxon>Hexapoda</taxon>
        <taxon>Insecta</taxon>
        <taxon>Pterygota</taxon>
        <taxon>Neoptera</taxon>
        <taxon>Endopterygota</taxon>
        <taxon>Diptera</taxon>
        <taxon>Brachycera</taxon>
        <taxon>Muscomorpha</taxon>
        <taxon>Ephydroidea</taxon>
        <taxon>Drosophilidae</taxon>
        <taxon>Drosophila</taxon>
        <taxon>Sophophora</taxon>
    </lineage>
</organism>
<evidence type="ECO:0000250" key="1"/>
<evidence type="ECO:0000250" key="2">
    <source>
        <dbReference type="UniProtKB" id="P11169"/>
    </source>
</evidence>
<evidence type="ECO:0000255" key="3"/>
<evidence type="ECO:0000256" key="4">
    <source>
        <dbReference type="SAM" id="MobiDB-lite"/>
    </source>
</evidence>
<evidence type="ECO:0000269" key="5">
    <source>
    </source>
</evidence>
<evidence type="ECO:0000269" key="6">
    <source>
    </source>
</evidence>
<evidence type="ECO:0000269" key="7">
    <source>
    </source>
</evidence>
<evidence type="ECO:0000303" key="8">
    <source>
    </source>
</evidence>
<evidence type="ECO:0000303" key="9">
    <source>
    </source>
</evidence>
<evidence type="ECO:0000303" key="10">
    <source>
    </source>
</evidence>
<evidence type="ECO:0000303" key="11">
    <source ref="5"/>
</evidence>
<evidence type="ECO:0000305" key="12"/>
<evidence type="ECO:0000312" key="13">
    <source>
        <dbReference type="EMBL" id="AAC36683.2"/>
    </source>
</evidence>
<evidence type="ECO:0000312" key="14">
    <source>
        <dbReference type="EMBL" id="AAL13347.1"/>
    </source>
</evidence>